<name>ZGPAT_DROPS</name>
<dbReference type="EMBL" id="CH379060">
    <property type="protein sequence ID" value="EAL33389.1"/>
    <property type="molecule type" value="Genomic_DNA"/>
</dbReference>
<dbReference type="RefSeq" id="XP_001356326.1">
    <property type="nucleotide sequence ID" value="XM_001356290.2"/>
</dbReference>
<dbReference type="SMR" id="Q29NF3"/>
<dbReference type="FunCoup" id="Q29NF3">
    <property type="interactions" value="1308"/>
</dbReference>
<dbReference type="STRING" id="46245.Q29NF3"/>
<dbReference type="EnsemblMetazoa" id="FBtr0281836">
    <property type="protein sequence ID" value="FBpp0280274"/>
    <property type="gene ID" value="FBgn0078377"/>
</dbReference>
<dbReference type="KEGG" id="dpo:4816976"/>
<dbReference type="eggNOG" id="KOG2185">
    <property type="taxonomic scope" value="Eukaryota"/>
</dbReference>
<dbReference type="HOGENOM" id="CLU_040504_1_0_1"/>
<dbReference type="InParanoid" id="Q29NF3"/>
<dbReference type="OMA" id="QYTRGIG"/>
<dbReference type="PhylomeDB" id="Q29NF3"/>
<dbReference type="Proteomes" id="UP000001819">
    <property type="component" value="Chromosome 4"/>
</dbReference>
<dbReference type="Bgee" id="FBgn0078377">
    <property type="expression patterns" value="Expressed in female reproductive system and 3 other cell types or tissues"/>
</dbReference>
<dbReference type="GO" id="GO:0005634">
    <property type="term" value="C:nucleus"/>
    <property type="evidence" value="ECO:0007669"/>
    <property type="project" value="UniProtKB-SubCell"/>
</dbReference>
<dbReference type="GO" id="GO:0001227">
    <property type="term" value="F:DNA-binding transcription repressor activity, RNA polymerase II-specific"/>
    <property type="evidence" value="ECO:0007669"/>
    <property type="project" value="TreeGrafter"/>
</dbReference>
<dbReference type="GO" id="GO:0000978">
    <property type="term" value="F:RNA polymerase II cis-regulatory region sequence-specific DNA binding"/>
    <property type="evidence" value="ECO:0007669"/>
    <property type="project" value="TreeGrafter"/>
</dbReference>
<dbReference type="GO" id="GO:0008270">
    <property type="term" value="F:zinc ion binding"/>
    <property type="evidence" value="ECO:0007669"/>
    <property type="project" value="UniProtKB-KW"/>
</dbReference>
<dbReference type="CDD" id="cd20384">
    <property type="entry name" value="Tudor_ZGPAT"/>
    <property type="match status" value="1"/>
</dbReference>
<dbReference type="Gene3D" id="2.30.30.1190">
    <property type="match status" value="1"/>
</dbReference>
<dbReference type="InterPro" id="IPR000467">
    <property type="entry name" value="G_patch_dom"/>
</dbReference>
<dbReference type="InterPro" id="IPR000571">
    <property type="entry name" value="Znf_CCCH"/>
</dbReference>
<dbReference type="PANTHER" id="PTHR46297">
    <property type="entry name" value="ZINC FINGER CCCH-TYPE WITH G PATCH DOMAIN-CONTAINING PROTEIN"/>
    <property type="match status" value="1"/>
</dbReference>
<dbReference type="PANTHER" id="PTHR46297:SF1">
    <property type="entry name" value="ZINC FINGER CCCH-TYPE WITH G PATCH DOMAIN-CONTAINING PROTEIN"/>
    <property type="match status" value="1"/>
</dbReference>
<dbReference type="Pfam" id="PF01585">
    <property type="entry name" value="G-patch"/>
    <property type="match status" value="1"/>
</dbReference>
<dbReference type="SMART" id="SM00443">
    <property type="entry name" value="G_patch"/>
    <property type="match status" value="1"/>
</dbReference>
<dbReference type="PROSITE" id="PS50174">
    <property type="entry name" value="G_PATCH"/>
    <property type="match status" value="1"/>
</dbReference>
<dbReference type="PROSITE" id="PS50103">
    <property type="entry name" value="ZF_C3H1"/>
    <property type="match status" value="1"/>
</dbReference>
<proteinExistence type="inferred from homology"/>
<sequence length="509" mass="58263">MDEYEAQLVAVEQALENTTDEQQREELSTLRTNLQELLALTRETEADQTAQQGDILDDELLRLKSELNELEEAAANVGATKNKDEEQQLKDLRAKYNALVGEKCSAPHEHSWGASSYHNALICGVDDEVIINRNSELDVRLRVLYINPTHCEMLPCNYYLEGECRFDEIRCRYSHGALVPGASIKSYIPPDFPRLARNCPVLAKMPDRLWHRGRVLCANFVEQTCRVRLDGQDHKERERDFQFEELFPLITEKEDELTSEDSSSSPHDESSDEIDSDMDDLEAAHRSRMVELSLFTFKPTEKLGAWEQYTRGIGSKLMEKMGYIHGTGLGSEGRGIVTPVSAQILPQGRSLDACMELREAANGDQDYFSVERKLKREQRRQNKANEKAYARETQRTDVFSFLNGSVLGGGESRHQGDQAAKKAKTNDLQQHSTKTLNVETVRVADDIRRKQRDIAKVKQSLDRNATDIQLQKRLHMQLQSQKQELATLQAHEHRLSKEQHTRKNKMFEF</sequence>
<protein>
    <recommendedName>
        <fullName>Zinc finger CCCH-type with G patch domain-containing protein</fullName>
    </recommendedName>
</protein>
<reference key="1">
    <citation type="journal article" date="2005" name="Genome Res.">
        <title>Comparative genome sequencing of Drosophila pseudoobscura: chromosomal, gene, and cis-element evolution.</title>
        <authorList>
            <person name="Richards S."/>
            <person name="Liu Y."/>
            <person name="Bettencourt B.R."/>
            <person name="Hradecky P."/>
            <person name="Letovsky S."/>
            <person name="Nielsen R."/>
            <person name="Thornton K."/>
            <person name="Hubisz M.J."/>
            <person name="Chen R."/>
            <person name="Meisel R.P."/>
            <person name="Couronne O."/>
            <person name="Hua S."/>
            <person name="Smith M.A."/>
            <person name="Zhang P."/>
            <person name="Liu J."/>
            <person name="Bussemaker H.J."/>
            <person name="van Batenburg M.F."/>
            <person name="Howells S.L."/>
            <person name="Scherer S.E."/>
            <person name="Sodergren E."/>
            <person name="Matthews B.B."/>
            <person name="Crosby M.A."/>
            <person name="Schroeder A.J."/>
            <person name="Ortiz-Barrientos D."/>
            <person name="Rives C.M."/>
            <person name="Metzker M.L."/>
            <person name="Muzny D.M."/>
            <person name="Scott G."/>
            <person name="Steffen D."/>
            <person name="Wheeler D.A."/>
            <person name="Worley K.C."/>
            <person name="Havlak P."/>
            <person name="Durbin K.J."/>
            <person name="Egan A."/>
            <person name="Gill R."/>
            <person name="Hume J."/>
            <person name="Morgan M.B."/>
            <person name="Miner G."/>
            <person name="Hamilton C."/>
            <person name="Huang Y."/>
            <person name="Waldron L."/>
            <person name="Verduzco D."/>
            <person name="Clerc-Blankenburg K.P."/>
            <person name="Dubchak I."/>
            <person name="Noor M.A.F."/>
            <person name="Anderson W."/>
            <person name="White K.P."/>
            <person name="Clark A.G."/>
            <person name="Schaeffer S.W."/>
            <person name="Gelbart W.M."/>
            <person name="Weinstock G.M."/>
            <person name="Gibbs R.A."/>
        </authorList>
    </citation>
    <scope>NUCLEOTIDE SEQUENCE [LARGE SCALE GENOMIC DNA]</scope>
    <source>
        <strain>MV2-25 / Tucson 14011-0121.94</strain>
    </source>
</reference>
<keyword id="KW-0238">DNA-binding</keyword>
<keyword id="KW-0479">Metal-binding</keyword>
<keyword id="KW-0539">Nucleus</keyword>
<keyword id="KW-1185">Reference proteome</keyword>
<keyword id="KW-0678">Repressor</keyword>
<keyword id="KW-0804">Transcription</keyword>
<keyword id="KW-0805">Transcription regulation</keyword>
<keyword id="KW-0862">Zinc</keyword>
<keyword id="KW-0863">Zinc-finger</keyword>
<gene>
    <name type="ORF">GA18374</name>
</gene>
<feature type="chain" id="PRO_0000385206" description="Zinc finger CCCH-type with G patch domain-containing protein">
    <location>
        <begin position="1"/>
        <end position="509"/>
    </location>
</feature>
<feature type="domain" description="G-patch" evidence="2">
    <location>
        <begin position="310"/>
        <end position="356"/>
    </location>
</feature>
<feature type="zinc finger region" description="C3H1-type" evidence="3">
    <location>
        <begin position="155"/>
        <end position="178"/>
    </location>
</feature>
<feature type="region of interest" description="Disordered" evidence="4">
    <location>
        <begin position="254"/>
        <end position="277"/>
    </location>
</feature>
<feature type="region of interest" description="Disordered" evidence="4">
    <location>
        <begin position="407"/>
        <end position="430"/>
    </location>
</feature>
<feature type="compositionally biased region" description="Basic and acidic residues" evidence="4">
    <location>
        <begin position="411"/>
        <end position="420"/>
    </location>
</feature>
<comment type="function">
    <text evidence="1">Transcription repressor.</text>
</comment>
<comment type="subcellular location">
    <subcellularLocation>
        <location evidence="1">Nucleus</location>
    </subcellularLocation>
</comment>
<organism>
    <name type="scientific">Drosophila pseudoobscura pseudoobscura</name>
    <name type="common">Fruit fly</name>
    <dbReference type="NCBI Taxonomy" id="46245"/>
    <lineage>
        <taxon>Eukaryota</taxon>
        <taxon>Metazoa</taxon>
        <taxon>Ecdysozoa</taxon>
        <taxon>Arthropoda</taxon>
        <taxon>Hexapoda</taxon>
        <taxon>Insecta</taxon>
        <taxon>Pterygota</taxon>
        <taxon>Neoptera</taxon>
        <taxon>Endopterygota</taxon>
        <taxon>Diptera</taxon>
        <taxon>Brachycera</taxon>
        <taxon>Muscomorpha</taxon>
        <taxon>Ephydroidea</taxon>
        <taxon>Drosophilidae</taxon>
        <taxon>Drosophila</taxon>
        <taxon>Sophophora</taxon>
    </lineage>
</organism>
<evidence type="ECO:0000250" key="1"/>
<evidence type="ECO:0000255" key="2">
    <source>
        <dbReference type="PROSITE-ProRule" id="PRU00092"/>
    </source>
</evidence>
<evidence type="ECO:0000255" key="3">
    <source>
        <dbReference type="PROSITE-ProRule" id="PRU00723"/>
    </source>
</evidence>
<evidence type="ECO:0000256" key="4">
    <source>
        <dbReference type="SAM" id="MobiDB-lite"/>
    </source>
</evidence>
<accession>Q29NF3</accession>